<accession>O29720</accession>
<feature type="chain" id="PRO_0000145360" description="DNA gyrase subunit B">
    <location>
        <begin position="1"/>
        <end position="632"/>
    </location>
</feature>
<feature type="domain" description="Toprim" evidence="1">
    <location>
        <begin position="419"/>
        <end position="533"/>
    </location>
</feature>
<feature type="binding site" evidence="1">
    <location>
        <position position="425"/>
    </location>
    <ligand>
        <name>Mg(2+)</name>
        <dbReference type="ChEBI" id="CHEBI:18420"/>
        <label>1</label>
        <note>catalytic</note>
    </ligand>
</feature>
<feature type="binding site" evidence="1">
    <location>
        <position position="498"/>
    </location>
    <ligand>
        <name>Mg(2+)</name>
        <dbReference type="ChEBI" id="CHEBI:18420"/>
        <label>1</label>
        <note>catalytic</note>
    </ligand>
</feature>
<feature type="binding site" evidence="1">
    <location>
        <position position="498"/>
    </location>
    <ligand>
        <name>Mg(2+)</name>
        <dbReference type="ChEBI" id="CHEBI:18420"/>
        <label>2</label>
    </ligand>
</feature>
<feature type="binding site" evidence="1">
    <location>
        <position position="500"/>
    </location>
    <ligand>
        <name>Mg(2+)</name>
        <dbReference type="ChEBI" id="CHEBI:18420"/>
        <label>2</label>
    </ligand>
</feature>
<feature type="site" description="Interaction with DNA" evidence="1">
    <location>
        <position position="450"/>
    </location>
</feature>
<feature type="site" description="Interaction with DNA" evidence="1">
    <location>
        <position position="453"/>
    </location>
</feature>
<sequence length="632" mass="71060">MSPDQTAVEYTAKDIEVLDDLEAVRKRPGMYIGGVGVRGLHHLLWEVVDNAVDEALAGYCDTIKVSLHKDGSASVEDNGRGIPTEMHELGKSALEIVMTKLHAGGKFSKKVYRVSGGLHGVGVSVVNALSEWLEVWVKRNGKIYYQKYQRGSRSPEAGHRTEVLGETKEHGTTVRFKPDREIFETTEFKYEIVAQRLKELAYLNRGLKIILFDEREGKEETFHFEDGIIGLVRSLNRNRKPLHEPIYIETTKDGVSVEVAIQFTDSDVENIQAFANNINTSEGGSHVVGFRAGLTRAVNEYGKKHLKKFEPVTGVDIREGLTAVISVKVPEPQFEGQTKTKLTNSDVKTVVESAVYSGVLRWLEENPAQAETLLNKFILNKKAREAAKRAKELVKRKNELITTLPGKLADCSSKNPEERELFIVEGESAGGSAKQARDRRFQAILPIKGKIINVEKAGMARVLKNDEIKAIISAIGAGIGKDFDITKARYRRIIIMTDADVDGAHIRTLLLTFFYRYMRPLIESGYLYIAQPPLYQIKKGKKSYYAYSDEELKRTLEQVGGGEVQRYKGLGEMNPQQLWETTMNPENRILIQVTLEDAKRADELFSILMGEDVESRRNFIMAHSKEVKNLDI</sequence>
<proteinExistence type="inferred from homology"/>
<reference key="1">
    <citation type="journal article" date="1997" name="Nature">
        <title>The complete genome sequence of the hyperthermophilic, sulphate-reducing archaeon Archaeoglobus fulgidus.</title>
        <authorList>
            <person name="Klenk H.-P."/>
            <person name="Clayton R.A."/>
            <person name="Tomb J.-F."/>
            <person name="White O."/>
            <person name="Nelson K.E."/>
            <person name="Ketchum K.A."/>
            <person name="Dodson R.J."/>
            <person name="Gwinn M.L."/>
            <person name="Hickey E.K."/>
            <person name="Peterson J.D."/>
            <person name="Richardson D.L."/>
            <person name="Kerlavage A.R."/>
            <person name="Graham D.E."/>
            <person name="Kyrpides N.C."/>
            <person name="Fleischmann R.D."/>
            <person name="Quackenbush J."/>
            <person name="Lee N.H."/>
            <person name="Sutton G.G."/>
            <person name="Gill S.R."/>
            <person name="Kirkness E.F."/>
            <person name="Dougherty B.A."/>
            <person name="McKenney K."/>
            <person name="Adams M.D."/>
            <person name="Loftus B.J."/>
            <person name="Peterson S.N."/>
            <person name="Reich C.I."/>
            <person name="McNeil L.K."/>
            <person name="Badger J.H."/>
            <person name="Glodek A."/>
            <person name="Zhou L."/>
            <person name="Overbeek R."/>
            <person name="Gocayne J.D."/>
            <person name="Weidman J.F."/>
            <person name="McDonald L.A."/>
            <person name="Utterback T.R."/>
            <person name="Cotton M.D."/>
            <person name="Spriggs T."/>
            <person name="Artiach P."/>
            <person name="Kaine B.P."/>
            <person name="Sykes S.M."/>
            <person name="Sadow P.W."/>
            <person name="D'Andrea K.P."/>
            <person name="Bowman C."/>
            <person name="Fujii C."/>
            <person name="Garland S.A."/>
            <person name="Mason T.M."/>
            <person name="Olsen G.J."/>
            <person name="Fraser C.M."/>
            <person name="Smith H.O."/>
            <person name="Woese C.R."/>
            <person name="Venter J.C."/>
        </authorList>
    </citation>
    <scope>NUCLEOTIDE SEQUENCE [LARGE SCALE GENOMIC DNA]</scope>
    <source>
        <strain>ATCC 49558 / DSM 4304 / JCM 9628 / NBRC 100126 / VC-16</strain>
    </source>
</reference>
<reference key="2">
    <citation type="unpublished observations" date="2001-04">
        <authorList>
            <person name="Medigue C."/>
            <person name="Bocs S."/>
        </authorList>
    </citation>
    <scope>IDENTIFICATION OF PROBABLE FRAMESHIFT</scope>
</reference>
<dbReference type="EC" id="5.6.2.2" evidence="1"/>
<dbReference type="EMBL" id="AE000782">
    <property type="protein sequence ID" value="AAB90708.1"/>
    <property type="status" value="ALT_FRAME"/>
    <property type="molecule type" value="Genomic_DNA"/>
</dbReference>
<dbReference type="PIR" id="B69316">
    <property type="entry name" value="B69316"/>
</dbReference>
<dbReference type="SMR" id="O29720"/>
<dbReference type="STRING" id="224325.AF_0530"/>
<dbReference type="PaxDb" id="224325-AF_0530"/>
<dbReference type="EnsemblBacteria" id="AAB90708">
    <property type="protein sequence ID" value="AAB90708"/>
    <property type="gene ID" value="AF_0530"/>
</dbReference>
<dbReference type="KEGG" id="afu:AF_0530"/>
<dbReference type="eggNOG" id="arCOG04371">
    <property type="taxonomic scope" value="Archaea"/>
</dbReference>
<dbReference type="HOGENOM" id="CLU_006146_1_2_2"/>
<dbReference type="PhylomeDB" id="O29720"/>
<dbReference type="Proteomes" id="UP000002199">
    <property type="component" value="Chromosome"/>
</dbReference>
<dbReference type="GO" id="GO:0005694">
    <property type="term" value="C:chromosome"/>
    <property type="evidence" value="ECO:0007669"/>
    <property type="project" value="InterPro"/>
</dbReference>
<dbReference type="GO" id="GO:0005737">
    <property type="term" value="C:cytoplasm"/>
    <property type="evidence" value="ECO:0007669"/>
    <property type="project" value="UniProtKB-SubCell"/>
</dbReference>
<dbReference type="GO" id="GO:0005524">
    <property type="term" value="F:ATP binding"/>
    <property type="evidence" value="ECO:0007669"/>
    <property type="project" value="UniProtKB-UniRule"/>
</dbReference>
<dbReference type="GO" id="GO:0003677">
    <property type="term" value="F:DNA binding"/>
    <property type="evidence" value="ECO:0007669"/>
    <property type="project" value="UniProtKB-KW"/>
</dbReference>
<dbReference type="GO" id="GO:0003918">
    <property type="term" value="F:DNA topoisomerase type II (double strand cut, ATP-hydrolyzing) activity"/>
    <property type="evidence" value="ECO:0007669"/>
    <property type="project" value="UniProtKB-UniRule"/>
</dbReference>
<dbReference type="GO" id="GO:0046872">
    <property type="term" value="F:metal ion binding"/>
    <property type="evidence" value="ECO:0007669"/>
    <property type="project" value="UniProtKB-KW"/>
</dbReference>
<dbReference type="GO" id="GO:0006265">
    <property type="term" value="P:DNA topological change"/>
    <property type="evidence" value="ECO:0007669"/>
    <property type="project" value="UniProtKB-UniRule"/>
</dbReference>
<dbReference type="GO" id="GO:0006261">
    <property type="term" value="P:DNA-templated DNA replication"/>
    <property type="evidence" value="ECO:0007669"/>
    <property type="project" value="UniProtKB-UniRule"/>
</dbReference>
<dbReference type="CDD" id="cd16928">
    <property type="entry name" value="HATPase_GyrB-like"/>
    <property type="match status" value="1"/>
</dbReference>
<dbReference type="CDD" id="cd00822">
    <property type="entry name" value="TopoII_Trans_DNA_gyrase"/>
    <property type="match status" value="1"/>
</dbReference>
<dbReference type="CDD" id="cd03366">
    <property type="entry name" value="TOPRIM_TopoIIA_GyrB"/>
    <property type="match status" value="1"/>
</dbReference>
<dbReference type="FunFam" id="3.30.230.10:FF:000005">
    <property type="entry name" value="DNA gyrase subunit B"/>
    <property type="match status" value="1"/>
</dbReference>
<dbReference type="FunFam" id="3.30.565.10:FF:000002">
    <property type="entry name" value="DNA gyrase subunit B"/>
    <property type="match status" value="1"/>
</dbReference>
<dbReference type="FunFam" id="3.40.50.670:FF:000002">
    <property type="entry name" value="DNA gyrase subunit B"/>
    <property type="match status" value="1"/>
</dbReference>
<dbReference type="Gene3D" id="3.30.230.10">
    <property type="match status" value="1"/>
</dbReference>
<dbReference type="Gene3D" id="3.40.50.670">
    <property type="match status" value="1"/>
</dbReference>
<dbReference type="Gene3D" id="3.30.565.10">
    <property type="entry name" value="Histidine kinase-like ATPase, C-terminal domain"/>
    <property type="match status" value="1"/>
</dbReference>
<dbReference type="HAMAP" id="MF_01898">
    <property type="entry name" value="GyrB"/>
    <property type="match status" value="1"/>
</dbReference>
<dbReference type="InterPro" id="IPR002288">
    <property type="entry name" value="DNA_gyrase_B_C"/>
</dbReference>
<dbReference type="InterPro" id="IPR011557">
    <property type="entry name" value="GyrB"/>
</dbReference>
<dbReference type="InterPro" id="IPR036890">
    <property type="entry name" value="HATPase_C_sf"/>
</dbReference>
<dbReference type="InterPro" id="IPR020568">
    <property type="entry name" value="Ribosomal_Su5_D2-typ_SF"/>
</dbReference>
<dbReference type="InterPro" id="IPR014721">
    <property type="entry name" value="Ribsml_uS5_D2-typ_fold_subgr"/>
</dbReference>
<dbReference type="InterPro" id="IPR001241">
    <property type="entry name" value="Topo_IIA"/>
</dbReference>
<dbReference type="InterPro" id="IPR013760">
    <property type="entry name" value="Topo_IIA-like_dom_sf"/>
</dbReference>
<dbReference type="InterPro" id="IPR000565">
    <property type="entry name" value="Topo_IIA_B"/>
</dbReference>
<dbReference type="InterPro" id="IPR013759">
    <property type="entry name" value="Topo_IIA_B_C"/>
</dbReference>
<dbReference type="InterPro" id="IPR013506">
    <property type="entry name" value="Topo_IIA_bsu_dom2"/>
</dbReference>
<dbReference type="InterPro" id="IPR006171">
    <property type="entry name" value="TOPRIM_dom"/>
</dbReference>
<dbReference type="InterPro" id="IPR034160">
    <property type="entry name" value="TOPRIM_GyrB"/>
</dbReference>
<dbReference type="NCBIfam" id="TIGR01059">
    <property type="entry name" value="gyrB"/>
    <property type="match status" value="1"/>
</dbReference>
<dbReference type="NCBIfam" id="NF004189">
    <property type="entry name" value="PRK05644.1"/>
    <property type="match status" value="1"/>
</dbReference>
<dbReference type="NCBIfam" id="NF011501">
    <property type="entry name" value="PRK14939.1"/>
    <property type="match status" value="1"/>
</dbReference>
<dbReference type="PANTHER" id="PTHR45866:SF1">
    <property type="entry name" value="DNA GYRASE SUBUNIT B, MITOCHONDRIAL"/>
    <property type="match status" value="1"/>
</dbReference>
<dbReference type="PANTHER" id="PTHR45866">
    <property type="entry name" value="DNA GYRASE/TOPOISOMERASE SUBUNIT B"/>
    <property type="match status" value="1"/>
</dbReference>
<dbReference type="Pfam" id="PF00204">
    <property type="entry name" value="DNA_gyraseB"/>
    <property type="match status" value="1"/>
</dbReference>
<dbReference type="Pfam" id="PF00986">
    <property type="entry name" value="DNA_gyraseB_C"/>
    <property type="match status" value="1"/>
</dbReference>
<dbReference type="Pfam" id="PF02518">
    <property type="entry name" value="HATPase_c"/>
    <property type="match status" value="1"/>
</dbReference>
<dbReference type="Pfam" id="PF01751">
    <property type="entry name" value="Toprim"/>
    <property type="match status" value="1"/>
</dbReference>
<dbReference type="PRINTS" id="PR01159">
    <property type="entry name" value="DNAGYRASEB"/>
</dbReference>
<dbReference type="PRINTS" id="PR00418">
    <property type="entry name" value="TPI2FAMILY"/>
</dbReference>
<dbReference type="SMART" id="SM00387">
    <property type="entry name" value="HATPase_c"/>
    <property type="match status" value="1"/>
</dbReference>
<dbReference type="SMART" id="SM00433">
    <property type="entry name" value="TOP2c"/>
    <property type="match status" value="1"/>
</dbReference>
<dbReference type="SUPFAM" id="SSF55874">
    <property type="entry name" value="ATPase domain of HSP90 chaperone/DNA topoisomerase II/histidine kinase"/>
    <property type="match status" value="1"/>
</dbReference>
<dbReference type="SUPFAM" id="SSF54211">
    <property type="entry name" value="Ribosomal protein S5 domain 2-like"/>
    <property type="match status" value="1"/>
</dbReference>
<dbReference type="SUPFAM" id="SSF56719">
    <property type="entry name" value="Type II DNA topoisomerase"/>
    <property type="match status" value="1"/>
</dbReference>
<dbReference type="PROSITE" id="PS50880">
    <property type="entry name" value="TOPRIM"/>
    <property type="match status" value="1"/>
</dbReference>
<organism>
    <name type="scientific">Archaeoglobus fulgidus (strain ATCC 49558 / DSM 4304 / JCM 9628 / NBRC 100126 / VC-16)</name>
    <dbReference type="NCBI Taxonomy" id="224325"/>
    <lineage>
        <taxon>Archaea</taxon>
        <taxon>Methanobacteriati</taxon>
        <taxon>Methanobacteriota</taxon>
        <taxon>Archaeoglobi</taxon>
        <taxon>Archaeoglobales</taxon>
        <taxon>Archaeoglobaceae</taxon>
        <taxon>Archaeoglobus</taxon>
    </lineage>
</organism>
<keyword id="KW-0067">ATP-binding</keyword>
<keyword id="KW-0963">Cytoplasm</keyword>
<keyword id="KW-0238">DNA-binding</keyword>
<keyword id="KW-0413">Isomerase</keyword>
<keyword id="KW-0460">Magnesium</keyword>
<keyword id="KW-0479">Metal-binding</keyword>
<keyword id="KW-0547">Nucleotide-binding</keyword>
<keyword id="KW-1185">Reference proteome</keyword>
<keyword id="KW-0799">Topoisomerase</keyword>
<name>GYRB_ARCFU</name>
<comment type="function">
    <text evidence="1">A type II topoisomerase that negatively supercoils closed circular double-stranded (ds) DNA in an ATP-dependent manner to modulate DNA topology and maintain chromosomes in an underwound state. Negative supercoiling favors strand separation, and DNA replication, transcription, recombination and repair, all of which involve strand separation. Also able to catalyze the interconversion of other topological isomers of dsDNA rings, including catenanes and knotted rings. Type II topoisomerases break and join 2 DNA strands simultaneously in an ATP-dependent manner.</text>
</comment>
<comment type="catalytic activity">
    <reaction evidence="1">
        <text>ATP-dependent breakage, passage and rejoining of double-stranded DNA.</text>
        <dbReference type="EC" id="5.6.2.2"/>
    </reaction>
</comment>
<comment type="cofactor">
    <cofactor evidence="1">
        <name>Mg(2+)</name>
        <dbReference type="ChEBI" id="CHEBI:18420"/>
    </cofactor>
    <cofactor evidence="1">
        <name>Mn(2+)</name>
        <dbReference type="ChEBI" id="CHEBI:29035"/>
    </cofactor>
    <cofactor evidence="1">
        <name>Ca(2+)</name>
        <dbReference type="ChEBI" id="CHEBI:29108"/>
    </cofactor>
    <text evidence="1">Binds two Mg(2+) per subunit. The magnesium ions form salt bridges with both the protein and the DNA. Can also accept other divalent metal cations, such as Mn(2+) or Ca(2+).</text>
</comment>
<comment type="subunit">
    <text evidence="1">Heterotetramer, composed of two GyrA and two GyrB chains. In the heterotetramer, GyrA contains the active site tyrosine that forms a transient covalent intermediate with DNA, while GyrB binds cofactors and catalyzes ATP hydrolysis.</text>
</comment>
<comment type="subcellular location">
    <subcellularLocation>
        <location evidence="1">Cytoplasm</location>
    </subcellularLocation>
</comment>
<comment type="miscellaneous">
    <text evidence="1">Few gyrases are as efficient as E.coli at forming negative supercoils. Not all organisms have 2 type II topoisomerases; in organisms with a single type II topoisomerase this enzyme also has to decatenate newly replicated chromosomes.</text>
</comment>
<comment type="similarity">
    <text evidence="1">Belongs to the type II topoisomerase GyrB family.</text>
</comment>
<comment type="sequence caution" evidence="2">
    <conflict type="frameshift">
        <sequence resource="EMBL-CDS" id="AAB90708"/>
    </conflict>
</comment>
<protein>
    <recommendedName>
        <fullName evidence="1">DNA gyrase subunit B</fullName>
        <ecNumber evidence="1">5.6.2.2</ecNumber>
    </recommendedName>
</protein>
<evidence type="ECO:0000255" key="1">
    <source>
        <dbReference type="HAMAP-Rule" id="MF_01898"/>
    </source>
</evidence>
<evidence type="ECO:0000305" key="2"/>
<gene>
    <name evidence="1" type="primary">gyrB</name>
    <name type="ordered locus">AF_0530</name>
</gene>